<proteinExistence type="inferred from homology"/>
<comment type="function">
    <text evidence="1">ATP-dependent specificity component of the Clp protease. It directs the protease to specific substrates. Can perform chaperone functions in the absence of ClpP.</text>
</comment>
<comment type="subunit">
    <text evidence="1">Component of the ClpX-ClpP complex. Forms a hexameric ring that, in the presence of ATP, binds to fourteen ClpP subunits assembled into a disk-like structure with a central cavity, resembling the structure of eukaryotic proteasomes.</text>
</comment>
<comment type="similarity">
    <text evidence="1">Belongs to the ClpX chaperone family.</text>
</comment>
<keyword id="KW-0067">ATP-binding</keyword>
<keyword id="KW-0143">Chaperone</keyword>
<keyword id="KW-0479">Metal-binding</keyword>
<keyword id="KW-0547">Nucleotide-binding</keyword>
<keyword id="KW-1185">Reference proteome</keyword>
<keyword id="KW-0862">Zinc</keyword>
<gene>
    <name evidence="1" type="primary">clpX</name>
    <name type="ordered locus">Npun_F0851</name>
</gene>
<name>CLPX_NOSP7</name>
<evidence type="ECO:0000255" key="1">
    <source>
        <dbReference type="HAMAP-Rule" id="MF_00175"/>
    </source>
</evidence>
<evidence type="ECO:0000255" key="2">
    <source>
        <dbReference type="PROSITE-ProRule" id="PRU01250"/>
    </source>
</evidence>
<evidence type="ECO:0000256" key="3">
    <source>
        <dbReference type="SAM" id="MobiDB-lite"/>
    </source>
</evidence>
<dbReference type="EMBL" id="CP001037">
    <property type="protein sequence ID" value="ACC79589.1"/>
    <property type="molecule type" value="Genomic_DNA"/>
</dbReference>
<dbReference type="RefSeq" id="WP_012407611.1">
    <property type="nucleotide sequence ID" value="NC_010628.1"/>
</dbReference>
<dbReference type="SMR" id="B2IT91"/>
<dbReference type="STRING" id="63737.Npun_F0851"/>
<dbReference type="EnsemblBacteria" id="ACC79589">
    <property type="protein sequence ID" value="ACC79589"/>
    <property type="gene ID" value="Npun_F0851"/>
</dbReference>
<dbReference type="KEGG" id="npu:Npun_F0851"/>
<dbReference type="eggNOG" id="COG1219">
    <property type="taxonomic scope" value="Bacteria"/>
</dbReference>
<dbReference type="HOGENOM" id="CLU_014218_8_2_3"/>
<dbReference type="OrthoDB" id="9804062at2"/>
<dbReference type="PhylomeDB" id="B2IT91"/>
<dbReference type="Proteomes" id="UP000001191">
    <property type="component" value="Chromosome"/>
</dbReference>
<dbReference type="GO" id="GO:0009376">
    <property type="term" value="C:HslUV protease complex"/>
    <property type="evidence" value="ECO:0007669"/>
    <property type="project" value="TreeGrafter"/>
</dbReference>
<dbReference type="GO" id="GO:0005524">
    <property type="term" value="F:ATP binding"/>
    <property type="evidence" value="ECO:0007669"/>
    <property type="project" value="UniProtKB-UniRule"/>
</dbReference>
<dbReference type="GO" id="GO:0016887">
    <property type="term" value="F:ATP hydrolysis activity"/>
    <property type="evidence" value="ECO:0007669"/>
    <property type="project" value="InterPro"/>
</dbReference>
<dbReference type="GO" id="GO:0140662">
    <property type="term" value="F:ATP-dependent protein folding chaperone"/>
    <property type="evidence" value="ECO:0007669"/>
    <property type="project" value="InterPro"/>
</dbReference>
<dbReference type="GO" id="GO:0046983">
    <property type="term" value="F:protein dimerization activity"/>
    <property type="evidence" value="ECO:0007669"/>
    <property type="project" value="InterPro"/>
</dbReference>
<dbReference type="GO" id="GO:0051082">
    <property type="term" value="F:unfolded protein binding"/>
    <property type="evidence" value="ECO:0007669"/>
    <property type="project" value="UniProtKB-UniRule"/>
</dbReference>
<dbReference type="GO" id="GO:0008270">
    <property type="term" value="F:zinc ion binding"/>
    <property type="evidence" value="ECO:0007669"/>
    <property type="project" value="InterPro"/>
</dbReference>
<dbReference type="GO" id="GO:0051301">
    <property type="term" value="P:cell division"/>
    <property type="evidence" value="ECO:0007669"/>
    <property type="project" value="TreeGrafter"/>
</dbReference>
<dbReference type="GO" id="GO:0051603">
    <property type="term" value="P:proteolysis involved in protein catabolic process"/>
    <property type="evidence" value="ECO:0007669"/>
    <property type="project" value="TreeGrafter"/>
</dbReference>
<dbReference type="CDD" id="cd19497">
    <property type="entry name" value="RecA-like_ClpX"/>
    <property type="match status" value="1"/>
</dbReference>
<dbReference type="FunFam" id="1.10.8.60:FF:000002">
    <property type="entry name" value="ATP-dependent Clp protease ATP-binding subunit ClpX"/>
    <property type="match status" value="1"/>
</dbReference>
<dbReference type="FunFam" id="3.40.50.300:FF:000005">
    <property type="entry name" value="ATP-dependent Clp protease ATP-binding subunit ClpX"/>
    <property type="match status" value="1"/>
</dbReference>
<dbReference type="Gene3D" id="1.10.8.60">
    <property type="match status" value="1"/>
</dbReference>
<dbReference type="Gene3D" id="6.20.220.10">
    <property type="entry name" value="ClpX chaperone, C4-type zinc finger domain"/>
    <property type="match status" value="1"/>
</dbReference>
<dbReference type="Gene3D" id="3.40.50.300">
    <property type="entry name" value="P-loop containing nucleotide triphosphate hydrolases"/>
    <property type="match status" value="1"/>
</dbReference>
<dbReference type="HAMAP" id="MF_00175">
    <property type="entry name" value="ClpX"/>
    <property type="match status" value="1"/>
</dbReference>
<dbReference type="InterPro" id="IPR003593">
    <property type="entry name" value="AAA+_ATPase"/>
</dbReference>
<dbReference type="InterPro" id="IPR050052">
    <property type="entry name" value="ATP-dep_Clp_protease_ClpX"/>
</dbReference>
<dbReference type="InterPro" id="IPR003959">
    <property type="entry name" value="ATPase_AAA_core"/>
</dbReference>
<dbReference type="InterPro" id="IPR019489">
    <property type="entry name" value="Clp_ATPase_C"/>
</dbReference>
<dbReference type="InterPro" id="IPR004487">
    <property type="entry name" value="Clp_protease_ATP-bd_su_ClpX"/>
</dbReference>
<dbReference type="InterPro" id="IPR046425">
    <property type="entry name" value="ClpX_bact"/>
</dbReference>
<dbReference type="InterPro" id="IPR027417">
    <property type="entry name" value="P-loop_NTPase"/>
</dbReference>
<dbReference type="InterPro" id="IPR010603">
    <property type="entry name" value="Znf_CppX_C4"/>
</dbReference>
<dbReference type="InterPro" id="IPR038366">
    <property type="entry name" value="Znf_CppX_C4_sf"/>
</dbReference>
<dbReference type="NCBIfam" id="TIGR00382">
    <property type="entry name" value="clpX"/>
    <property type="match status" value="1"/>
</dbReference>
<dbReference type="NCBIfam" id="NF003745">
    <property type="entry name" value="PRK05342.1"/>
    <property type="match status" value="1"/>
</dbReference>
<dbReference type="PANTHER" id="PTHR48102:SF7">
    <property type="entry name" value="ATP-DEPENDENT CLP PROTEASE ATP-BINDING SUBUNIT CLPX-LIKE, MITOCHONDRIAL"/>
    <property type="match status" value="1"/>
</dbReference>
<dbReference type="PANTHER" id="PTHR48102">
    <property type="entry name" value="ATP-DEPENDENT CLP PROTEASE ATP-BINDING SUBUNIT CLPX-LIKE, MITOCHONDRIAL-RELATED"/>
    <property type="match status" value="1"/>
</dbReference>
<dbReference type="Pfam" id="PF07724">
    <property type="entry name" value="AAA_2"/>
    <property type="match status" value="1"/>
</dbReference>
<dbReference type="Pfam" id="PF10431">
    <property type="entry name" value="ClpB_D2-small"/>
    <property type="match status" value="1"/>
</dbReference>
<dbReference type="Pfam" id="PF06689">
    <property type="entry name" value="zf-C4_ClpX"/>
    <property type="match status" value="1"/>
</dbReference>
<dbReference type="SMART" id="SM00382">
    <property type="entry name" value="AAA"/>
    <property type="match status" value="1"/>
</dbReference>
<dbReference type="SMART" id="SM01086">
    <property type="entry name" value="ClpB_D2-small"/>
    <property type="match status" value="1"/>
</dbReference>
<dbReference type="SMART" id="SM00994">
    <property type="entry name" value="zf-C4_ClpX"/>
    <property type="match status" value="1"/>
</dbReference>
<dbReference type="SUPFAM" id="SSF57716">
    <property type="entry name" value="Glucocorticoid receptor-like (DNA-binding domain)"/>
    <property type="match status" value="1"/>
</dbReference>
<dbReference type="SUPFAM" id="SSF52540">
    <property type="entry name" value="P-loop containing nucleoside triphosphate hydrolases"/>
    <property type="match status" value="1"/>
</dbReference>
<dbReference type="PROSITE" id="PS51902">
    <property type="entry name" value="CLPX_ZB"/>
    <property type="match status" value="1"/>
</dbReference>
<sequence>MSKYDSHLKCSFCGKSQEQVRKLIAGPGVYICDECVDLCNEILDEELLDTNGAAAQPTPRAEPPQKRRTQSSSISFNQIPKPREIKKYLDEHVIGQDEAKKVLSVAVYNHYKRLAVIQSKATGKAAADDAVELQKSNILLIGPTGCGKTLLAQTLAKILDVPFAVADATTLTEAGYVGEDVENILLRLLQVADLDIEEAQRGIIYIDEIDKIARKSENPSITRDVSGEGVQQALLKMLEGTIANVPPQGGRKHPYQDCIQIDTSNILFVCGGAFVGLEKVVDQRVGKKAIGFVQPGEGQTKEKRAADTLRHLAPDDLVKFGMIPEFIGRVPMVAVVDPLDEEALMAILTQPRSALVKQYQKLLKMDNVQLDFKPDALRAIAQEAYRRKTGARALRGIVEELMLDVMYELPSRKDVTRCTVTREMVEKRSTAELIIHPSSLPKPESA</sequence>
<organism>
    <name type="scientific">Nostoc punctiforme (strain ATCC 29133 / PCC 73102)</name>
    <dbReference type="NCBI Taxonomy" id="63737"/>
    <lineage>
        <taxon>Bacteria</taxon>
        <taxon>Bacillati</taxon>
        <taxon>Cyanobacteriota</taxon>
        <taxon>Cyanophyceae</taxon>
        <taxon>Nostocales</taxon>
        <taxon>Nostocaceae</taxon>
        <taxon>Nostoc</taxon>
    </lineage>
</organism>
<protein>
    <recommendedName>
        <fullName evidence="1">ATP-dependent Clp protease ATP-binding subunit ClpX</fullName>
    </recommendedName>
</protein>
<reference key="1">
    <citation type="journal article" date="2013" name="Plant Physiol.">
        <title>A Nostoc punctiforme Sugar Transporter Necessary to Establish a Cyanobacterium-Plant Symbiosis.</title>
        <authorList>
            <person name="Ekman M."/>
            <person name="Picossi S."/>
            <person name="Campbell E.L."/>
            <person name="Meeks J.C."/>
            <person name="Flores E."/>
        </authorList>
    </citation>
    <scope>NUCLEOTIDE SEQUENCE [LARGE SCALE GENOMIC DNA]</scope>
    <source>
        <strain>ATCC 29133 / PCC 73102</strain>
    </source>
</reference>
<accession>B2IT91</accession>
<feature type="chain" id="PRO_1000097976" description="ATP-dependent Clp protease ATP-binding subunit ClpX">
    <location>
        <begin position="1"/>
        <end position="446"/>
    </location>
</feature>
<feature type="domain" description="ClpX-type ZB" evidence="2">
    <location>
        <begin position="1"/>
        <end position="51"/>
    </location>
</feature>
<feature type="region of interest" description="Disordered" evidence="3">
    <location>
        <begin position="54"/>
        <end position="76"/>
    </location>
</feature>
<feature type="binding site" evidence="2">
    <location>
        <position position="10"/>
    </location>
    <ligand>
        <name>Zn(2+)</name>
        <dbReference type="ChEBI" id="CHEBI:29105"/>
    </ligand>
</feature>
<feature type="binding site" evidence="2">
    <location>
        <position position="13"/>
    </location>
    <ligand>
        <name>Zn(2+)</name>
        <dbReference type="ChEBI" id="CHEBI:29105"/>
    </ligand>
</feature>
<feature type="binding site" evidence="2">
    <location>
        <position position="32"/>
    </location>
    <ligand>
        <name>Zn(2+)</name>
        <dbReference type="ChEBI" id="CHEBI:29105"/>
    </ligand>
</feature>
<feature type="binding site" evidence="2">
    <location>
        <position position="35"/>
    </location>
    <ligand>
        <name>Zn(2+)</name>
        <dbReference type="ChEBI" id="CHEBI:29105"/>
    </ligand>
</feature>
<feature type="binding site" evidence="1">
    <location>
        <begin position="143"/>
        <end position="150"/>
    </location>
    <ligand>
        <name>ATP</name>
        <dbReference type="ChEBI" id="CHEBI:30616"/>
    </ligand>
</feature>